<reference key="1">
    <citation type="journal article" date="2005" name="Genome Res.">
        <title>The Chlamydophila abortus genome sequence reveals an array of variable proteins that contribute to interspecies variation.</title>
        <authorList>
            <person name="Thomson N.R."/>
            <person name="Yeats C."/>
            <person name="Bell K."/>
            <person name="Holden M.T.G."/>
            <person name="Bentley S.D."/>
            <person name="Livingstone M."/>
            <person name="Cerdeno-Tarraga A.-M."/>
            <person name="Harris B."/>
            <person name="Doggett J."/>
            <person name="Ormond D."/>
            <person name="Mungall K."/>
            <person name="Clarke K."/>
            <person name="Feltwell T."/>
            <person name="Hance Z."/>
            <person name="Sanders M."/>
            <person name="Quail M.A."/>
            <person name="Price C."/>
            <person name="Barrell B.G."/>
            <person name="Parkhill J."/>
            <person name="Longbottom D."/>
        </authorList>
    </citation>
    <scope>NUCLEOTIDE SEQUENCE [LARGE SCALE GENOMIC DNA]</scope>
    <source>
        <strain>DSM 27085 / S26/3</strain>
    </source>
</reference>
<name>RSMH_CHLAB</name>
<organism>
    <name type="scientific">Chlamydia abortus (strain DSM 27085 / S26/3)</name>
    <name type="common">Chlamydophila abortus</name>
    <dbReference type="NCBI Taxonomy" id="218497"/>
    <lineage>
        <taxon>Bacteria</taxon>
        <taxon>Pseudomonadati</taxon>
        <taxon>Chlamydiota</taxon>
        <taxon>Chlamydiia</taxon>
        <taxon>Chlamydiales</taxon>
        <taxon>Chlamydiaceae</taxon>
        <taxon>Chlamydia/Chlamydophila group</taxon>
        <taxon>Chlamydia</taxon>
    </lineage>
</organism>
<evidence type="ECO:0000255" key="1">
    <source>
        <dbReference type="HAMAP-Rule" id="MF_01007"/>
    </source>
</evidence>
<dbReference type="EC" id="2.1.1.199" evidence="1"/>
<dbReference type="EMBL" id="CR848038">
    <property type="protein sequence ID" value="CAH63812.1"/>
    <property type="molecule type" value="Genomic_DNA"/>
</dbReference>
<dbReference type="RefSeq" id="WP_011097015.1">
    <property type="nucleotide sequence ID" value="NC_004552.2"/>
</dbReference>
<dbReference type="SMR" id="Q5L6B5"/>
<dbReference type="KEGG" id="cab:CAB361"/>
<dbReference type="eggNOG" id="COG0275">
    <property type="taxonomic scope" value="Bacteria"/>
</dbReference>
<dbReference type="HOGENOM" id="CLU_038422_3_0_0"/>
<dbReference type="OrthoDB" id="9806637at2"/>
<dbReference type="Proteomes" id="UP000001012">
    <property type="component" value="Chromosome"/>
</dbReference>
<dbReference type="GO" id="GO:0005737">
    <property type="term" value="C:cytoplasm"/>
    <property type="evidence" value="ECO:0007669"/>
    <property type="project" value="UniProtKB-SubCell"/>
</dbReference>
<dbReference type="GO" id="GO:0071424">
    <property type="term" value="F:rRNA (cytosine-N4-)-methyltransferase activity"/>
    <property type="evidence" value="ECO:0007669"/>
    <property type="project" value="UniProtKB-UniRule"/>
</dbReference>
<dbReference type="GO" id="GO:0070475">
    <property type="term" value="P:rRNA base methylation"/>
    <property type="evidence" value="ECO:0007669"/>
    <property type="project" value="UniProtKB-UniRule"/>
</dbReference>
<dbReference type="CDD" id="cd02440">
    <property type="entry name" value="AdoMet_MTases"/>
    <property type="match status" value="1"/>
</dbReference>
<dbReference type="Gene3D" id="1.10.150.170">
    <property type="entry name" value="Putative methyltransferase TM0872, insert domain"/>
    <property type="match status" value="1"/>
</dbReference>
<dbReference type="Gene3D" id="3.40.50.150">
    <property type="entry name" value="Vaccinia Virus protein VP39"/>
    <property type="match status" value="1"/>
</dbReference>
<dbReference type="HAMAP" id="MF_01007">
    <property type="entry name" value="16SrRNA_methyltr_H"/>
    <property type="match status" value="1"/>
</dbReference>
<dbReference type="InterPro" id="IPR002903">
    <property type="entry name" value="RsmH"/>
</dbReference>
<dbReference type="InterPro" id="IPR023397">
    <property type="entry name" value="SAM-dep_MeTrfase_MraW_recog"/>
</dbReference>
<dbReference type="InterPro" id="IPR029063">
    <property type="entry name" value="SAM-dependent_MTases_sf"/>
</dbReference>
<dbReference type="NCBIfam" id="TIGR00006">
    <property type="entry name" value="16S rRNA (cytosine(1402)-N(4))-methyltransferase RsmH"/>
    <property type="match status" value="1"/>
</dbReference>
<dbReference type="PANTHER" id="PTHR11265:SF0">
    <property type="entry name" value="12S RRNA N4-METHYLCYTIDINE METHYLTRANSFERASE"/>
    <property type="match status" value="1"/>
</dbReference>
<dbReference type="PANTHER" id="PTHR11265">
    <property type="entry name" value="S-ADENOSYL-METHYLTRANSFERASE MRAW"/>
    <property type="match status" value="1"/>
</dbReference>
<dbReference type="Pfam" id="PF01795">
    <property type="entry name" value="Methyltransf_5"/>
    <property type="match status" value="1"/>
</dbReference>
<dbReference type="PIRSF" id="PIRSF004486">
    <property type="entry name" value="MraW"/>
    <property type="match status" value="1"/>
</dbReference>
<dbReference type="SUPFAM" id="SSF81799">
    <property type="entry name" value="Putative methyltransferase TM0872, insert domain"/>
    <property type="match status" value="1"/>
</dbReference>
<dbReference type="SUPFAM" id="SSF53335">
    <property type="entry name" value="S-adenosyl-L-methionine-dependent methyltransferases"/>
    <property type="match status" value="1"/>
</dbReference>
<accession>Q5L6B5</accession>
<keyword id="KW-0963">Cytoplasm</keyword>
<keyword id="KW-0489">Methyltransferase</keyword>
<keyword id="KW-0698">rRNA processing</keyword>
<keyword id="KW-0949">S-adenosyl-L-methionine</keyword>
<keyword id="KW-0808">Transferase</keyword>
<gene>
    <name evidence="1" type="primary">rsmH</name>
    <name type="synonym">mraW</name>
    <name type="ordered locus">CAB361</name>
</gene>
<protein>
    <recommendedName>
        <fullName evidence="1">Ribosomal RNA small subunit methyltransferase H</fullName>
        <ecNumber evidence="1">2.1.1.199</ecNumber>
    </recommendedName>
    <alternativeName>
        <fullName evidence="1">16S rRNA m(4)C1402 methyltransferase</fullName>
    </alternativeName>
    <alternativeName>
        <fullName evidence="1">rRNA (cytosine-N(4)-)-methyltransferase RsmH</fullName>
    </alternativeName>
</protein>
<proteinExistence type="inferred from homology"/>
<sequence>MSATPSHIPVLVNECLSLFADRHPKFFCDVTVGAGGHAEAFLSAYPSIVSYDASDRDVAALSMAKEHLEKFGDRVHFHHASFEDLSKDPREHVYDGILADLGVSSMQLDNLSRGFSFQGDDHALDMRMDVTKGITASEVLHTLREEELGKIFREYGEEPQWKNAAKAIVHFRRRKKIVTVRDLKEATAKVFPSYRLRKKIHPLTLIFQALRVYVNQEDVQLKVLLESAMRWLAPGGRLIIISFCSSEDRPVKWFFREAEKSGLGMILTKKVIMPTYEEIRKNPRCRSAKLRCFEKKFL</sequence>
<comment type="function">
    <text evidence="1">Specifically methylates the N4 position of cytidine in position 1402 (C1402) of 16S rRNA.</text>
</comment>
<comment type="catalytic activity">
    <reaction evidence="1">
        <text>cytidine(1402) in 16S rRNA + S-adenosyl-L-methionine = N(4)-methylcytidine(1402) in 16S rRNA + S-adenosyl-L-homocysteine + H(+)</text>
        <dbReference type="Rhea" id="RHEA:42928"/>
        <dbReference type="Rhea" id="RHEA-COMP:10286"/>
        <dbReference type="Rhea" id="RHEA-COMP:10287"/>
        <dbReference type="ChEBI" id="CHEBI:15378"/>
        <dbReference type="ChEBI" id="CHEBI:57856"/>
        <dbReference type="ChEBI" id="CHEBI:59789"/>
        <dbReference type="ChEBI" id="CHEBI:74506"/>
        <dbReference type="ChEBI" id="CHEBI:82748"/>
        <dbReference type="EC" id="2.1.1.199"/>
    </reaction>
</comment>
<comment type="subcellular location">
    <subcellularLocation>
        <location evidence="1">Cytoplasm</location>
    </subcellularLocation>
</comment>
<comment type="similarity">
    <text evidence="1">Belongs to the methyltransferase superfamily. RsmH family.</text>
</comment>
<feature type="chain" id="PRO_0000108603" description="Ribosomal RNA small subunit methyltransferase H">
    <location>
        <begin position="1"/>
        <end position="298"/>
    </location>
</feature>
<feature type="binding site" evidence="1">
    <location>
        <begin position="35"/>
        <end position="37"/>
    </location>
    <ligand>
        <name>S-adenosyl-L-methionine</name>
        <dbReference type="ChEBI" id="CHEBI:59789"/>
    </ligand>
</feature>
<feature type="binding site" evidence="1">
    <location>
        <position position="55"/>
    </location>
    <ligand>
        <name>S-adenosyl-L-methionine</name>
        <dbReference type="ChEBI" id="CHEBI:59789"/>
    </ligand>
</feature>
<feature type="binding site" evidence="1">
    <location>
        <position position="82"/>
    </location>
    <ligand>
        <name>S-adenosyl-L-methionine</name>
        <dbReference type="ChEBI" id="CHEBI:59789"/>
    </ligand>
</feature>
<feature type="binding site" evidence="1">
    <location>
        <position position="100"/>
    </location>
    <ligand>
        <name>S-adenosyl-L-methionine</name>
        <dbReference type="ChEBI" id="CHEBI:59789"/>
    </ligand>
</feature>
<feature type="binding site" evidence="1">
    <location>
        <position position="107"/>
    </location>
    <ligand>
        <name>S-adenosyl-L-methionine</name>
        <dbReference type="ChEBI" id="CHEBI:59789"/>
    </ligand>
</feature>